<protein>
    <recommendedName>
        <fullName evidence="1">Ribosome-recycling factor</fullName>
        <shortName evidence="1">RRF</shortName>
    </recommendedName>
    <alternativeName>
        <fullName evidence="1">Ribosome-releasing factor</fullName>
    </alternativeName>
</protein>
<gene>
    <name evidence="1" type="primary">frr</name>
    <name type="ordered locus">BWG_0164</name>
</gene>
<sequence>MISDIRKDAEVRMDKCVEAFKTQISKIRTGRASPSLLDGIVVEYYGTPTPLRQLASVTVEDSRTLKINVFDRSMSPAVEKAIMASDLGLNPNSAGSDIRVPLPPLTEERRKDLTKIVRGEAEQARVAVRNVRRDANDKVKALLKDKEISEDDDRRSQDDVQKLTDAAIKKIEAALADKEAELMQF</sequence>
<keyword id="KW-0007">Acetylation</keyword>
<keyword id="KW-0963">Cytoplasm</keyword>
<keyword id="KW-0648">Protein biosynthesis</keyword>
<proteinExistence type="inferred from homology"/>
<organism>
    <name type="scientific">Escherichia coli (strain K12 / MC4100 / BW2952)</name>
    <dbReference type="NCBI Taxonomy" id="595496"/>
    <lineage>
        <taxon>Bacteria</taxon>
        <taxon>Pseudomonadati</taxon>
        <taxon>Pseudomonadota</taxon>
        <taxon>Gammaproteobacteria</taxon>
        <taxon>Enterobacterales</taxon>
        <taxon>Enterobacteriaceae</taxon>
        <taxon>Escherichia</taxon>
    </lineage>
</organism>
<accession>C4ZRR4</accession>
<feature type="chain" id="PRO_1000202096" description="Ribosome-recycling factor">
    <location>
        <begin position="1"/>
        <end position="185"/>
    </location>
</feature>
<feature type="modified residue" description="N6-acetyllysine" evidence="1">
    <location>
        <position position="162"/>
    </location>
</feature>
<name>RRF_ECOBW</name>
<reference key="1">
    <citation type="journal article" date="2009" name="J. Bacteriol.">
        <title>Genomic sequencing reveals regulatory mutations and recombinational events in the widely used MC4100 lineage of Escherichia coli K-12.</title>
        <authorList>
            <person name="Ferenci T."/>
            <person name="Zhou Z."/>
            <person name="Betteridge T."/>
            <person name="Ren Y."/>
            <person name="Liu Y."/>
            <person name="Feng L."/>
            <person name="Reeves P.R."/>
            <person name="Wang L."/>
        </authorList>
    </citation>
    <scope>NUCLEOTIDE SEQUENCE [LARGE SCALE GENOMIC DNA]</scope>
    <source>
        <strain>K12 / MC4100 / BW2952</strain>
    </source>
</reference>
<comment type="function">
    <text evidence="1">Responsible for the release of ribosomes from messenger RNA at the termination of protein biosynthesis. May increase the efficiency of translation by recycling ribosomes from one round of translation to another.</text>
</comment>
<comment type="subcellular location">
    <subcellularLocation>
        <location evidence="1">Cytoplasm</location>
    </subcellularLocation>
</comment>
<comment type="similarity">
    <text evidence="1">Belongs to the RRF family.</text>
</comment>
<dbReference type="EMBL" id="CP001396">
    <property type="protein sequence ID" value="ACR65486.1"/>
    <property type="molecule type" value="Genomic_DNA"/>
</dbReference>
<dbReference type="RefSeq" id="WP_000622418.1">
    <property type="nucleotide sequence ID" value="NC_012759.1"/>
</dbReference>
<dbReference type="SMR" id="C4ZRR4"/>
<dbReference type="GeneID" id="93777253"/>
<dbReference type="KEGG" id="ebw:BWG_0164"/>
<dbReference type="HOGENOM" id="CLU_073981_2_1_6"/>
<dbReference type="GO" id="GO:0005829">
    <property type="term" value="C:cytosol"/>
    <property type="evidence" value="ECO:0007669"/>
    <property type="project" value="GOC"/>
</dbReference>
<dbReference type="GO" id="GO:0043023">
    <property type="term" value="F:ribosomal large subunit binding"/>
    <property type="evidence" value="ECO:0007669"/>
    <property type="project" value="TreeGrafter"/>
</dbReference>
<dbReference type="GO" id="GO:0002184">
    <property type="term" value="P:cytoplasmic translational termination"/>
    <property type="evidence" value="ECO:0007669"/>
    <property type="project" value="TreeGrafter"/>
</dbReference>
<dbReference type="CDD" id="cd00520">
    <property type="entry name" value="RRF"/>
    <property type="match status" value="1"/>
</dbReference>
<dbReference type="FunFam" id="1.10.132.20:FF:000001">
    <property type="entry name" value="Ribosome-recycling factor"/>
    <property type="match status" value="1"/>
</dbReference>
<dbReference type="FunFam" id="3.30.1360.40:FF:000001">
    <property type="entry name" value="Ribosome-recycling factor"/>
    <property type="match status" value="1"/>
</dbReference>
<dbReference type="Gene3D" id="3.30.1360.40">
    <property type="match status" value="1"/>
</dbReference>
<dbReference type="Gene3D" id="1.10.132.20">
    <property type="entry name" value="Ribosome-recycling factor"/>
    <property type="match status" value="1"/>
</dbReference>
<dbReference type="HAMAP" id="MF_00040">
    <property type="entry name" value="RRF"/>
    <property type="match status" value="1"/>
</dbReference>
<dbReference type="InterPro" id="IPR002661">
    <property type="entry name" value="Ribosome_recyc_fac"/>
</dbReference>
<dbReference type="InterPro" id="IPR023584">
    <property type="entry name" value="Ribosome_recyc_fac_dom"/>
</dbReference>
<dbReference type="InterPro" id="IPR036191">
    <property type="entry name" value="RRF_sf"/>
</dbReference>
<dbReference type="NCBIfam" id="TIGR00496">
    <property type="entry name" value="frr"/>
    <property type="match status" value="1"/>
</dbReference>
<dbReference type="PANTHER" id="PTHR20982:SF3">
    <property type="entry name" value="MITOCHONDRIAL RIBOSOME RECYCLING FACTOR PSEUDO 1"/>
    <property type="match status" value="1"/>
</dbReference>
<dbReference type="PANTHER" id="PTHR20982">
    <property type="entry name" value="RIBOSOME RECYCLING FACTOR"/>
    <property type="match status" value="1"/>
</dbReference>
<dbReference type="Pfam" id="PF01765">
    <property type="entry name" value="RRF"/>
    <property type="match status" value="1"/>
</dbReference>
<dbReference type="SUPFAM" id="SSF55194">
    <property type="entry name" value="Ribosome recycling factor, RRF"/>
    <property type="match status" value="1"/>
</dbReference>
<evidence type="ECO:0000255" key="1">
    <source>
        <dbReference type="HAMAP-Rule" id="MF_00040"/>
    </source>
</evidence>